<feature type="chain" id="PRO_0000046472" description="rDNA transcriptional regulator POL5">
    <location>
        <begin position="1"/>
        <end position="1022"/>
    </location>
</feature>
<feature type="region of interest" description="Disordered" evidence="1">
    <location>
        <begin position="706"/>
        <end position="748"/>
    </location>
</feature>
<feature type="region of interest" description="Disordered" evidence="1">
    <location>
        <begin position="778"/>
        <end position="805"/>
    </location>
</feature>
<feature type="compositionally biased region" description="Acidic residues" evidence="1">
    <location>
        <begin position="706"/>
        <end position="719"/>
    </location>
</feature>
<feature type="compositionally biased region" description="Acidic residues" evidence="1">
    <location>
        <begin position="728"/>
        <end position="748"/>
    </location>
</feature>
<feature type="compositionally biased region" description="Acidic residues" evidence="1">
    <location>
        <begin position="781"/>
        <end position="802"/>
    </location>
</feature>
<feature type="modified residue" description="Phosphoserine" evidence="9">
    <location>
        <position position="789"/>
    </location>
</feature>
<feature type="mutagenesis site" description="In POL5dn; has no DNA synthesis activity, but complements the lethality of a pol5 null mutant; when associated with N-625." evidence="2">
    <original>D</original>
    <variation>N</variation>
    <location>
        <position position="623"/>
    </location>
</feature>
<feature type="mutagenesis site" description="In POL5dn; has no DNA synthesis activity, but complements the lethality of a pol5 null mutant; when associated with N-623." evidence="2">
    <original>D</original>
    <variation>N</variation>
    <location>
        <position position="625"/>
    </location>
</feature>
<reference key="1">
    <citation type="journal article" date="2002" name="Proc. Natl. Acad. Sci. U.S.A.">
        <title>The fifth essential DNA polymerase phi in Saccharomyces cerevisiae is localized to the nucleolus and plays an important role in synthesis of rRNA.</title>
        <authorList>
            <person name="Shimizu K."/>
            <person name="Kawasaki Y."/>
            <person name="Hiraga S."/>
            <person name="Tawaramoto M."/>
            <person name="Nakashima N."/>
            <person name="Sugino A."/>
        </authorList>
    </citation>
    <scope>NUCLEOTIDE SEQUENCE [GENOMIC DNA]</scope>
    <scope>FUNCTION</scope>
    <scope>CATALYTIC ACTIVITY</scope>
    <scope>SUBCELLULAR LOCATION</scope>
    <scope>ACTIVITY REGULATION</scope>
    <scope>MUTAGENESIS OF ASP-623 AND ASP-625</scope>
</reference>
<reference key="2">
    <citation type="journal article" date="1997" name="Nature">
        <title>The nucleotide sequence of Saccharomyces cerevisiae chromosome V.</title>
        <authorList>
            <person name="Dietrich F.S."/>
            <person name="Mulligan J.T."/>
            <person name="Hennessy K.M."/>
            <person name="Yelton M.A."/>
            <person name="Allen E."/>
            <person name="Araujo R."/>
            <person name="Aviles E."/>
            <person name="Berno A."/>
            <person name="Brennan T."/>
            <person name="Carpenter J."/>
            <person name="Chen E."/>
            <person name="Cherry J.M."/>
            <person name="Chung E."/>
            <person name="Duncan M."/>
            <person name="Guzman E."/>
            <person name="Hartzell G."/>
            <person name="Hunicke-Smith S."/>
            <person name="Hyman R.W."/>
            <person name="Kayser A."/>
            <person name="Komp C."/>
            <person name="Lashkari D."/>
            <person name="Lew H."/>
            <person name="Lin D."/>
            <person name="Mosedale D."/>
            <person name="Nakahara K."/>
            <person name="Namath A."/>
            <person name="Norgren R."/>
            <person name="Oefner P."/>
            <person name="Oh C."/>
            <person name="Petel F.X."/>
            <person name="Roberts D."/>
            <person name="Sehl P."/>
            <person name="Schramm S."/>
            <person name="Shogren T."/>
            <person name="Smith V."/>
            <person name="Taylor P."/>
            <person name="Wei Y."/>
            <person name="Botstein D."/>
            <person name="Davis R.W."/>
        </authorList>
    </citation>
    <scope>NUCLEOTIDE SEQUENCE [LARGE SCALE GENOMIC DNA]</scope>
    <source>
        <strain>ATCC 204508 / S288c</strain>
    </source>
</reference>
<reference key="3">
    <citation type="journal article" date="2014" name="G3 (Bethesda)">
        <title>The reference genome sequence of Saccharomyces cerevisiae: Then and now.</title>
        <authorList>
            <person name="Engel S.R."/>
            <person name="Dietrich F.S."/>
            <person name="Fisk D.G."/>
            <person name="Binkley G."/>
            <person name="Balakrishnan R."/>
            <person name="Costanzo M.C."/>
            <person name="Dwight S.S."/>
            <person name="Hitz B.C."/>
            <person name="Karra K."/>
            <person name="Nash R.S."/>
            <person name="Weng S."/>
            <person name="Wong E.D."/>
            <person name="Lloyd P."/>
            <person name="Skrzypek M.S."/>
            <person name="Miyasato S.R."/>
            <person name="Simison M."/>
            <person name="Cherry J.M."/>
        </authorList>
    </citation>
    <scope>GENOME REANNOTATION</scope>
    <source>
        <strain>ATCC 204508 / S288c</strain>
    </source>
</reference>
<reference key="4">
    <citation type="journal article" date="1995" name="Trends Biochem. Sci.">
        <title>Yeast DNA polymerases and their role at the replication fork.</title>
        <authorList>
            <person name="Sugino A."/>
        </authorList>
    </citation>
    <scope>IDENTIFICATION</scope>
</reference>
<reference key="5">
    <citation type="journal article" date="2003" name="Cell Cycle">
        <title>Yeast POL5 is an evolutionarily conserved regulator of rDNA transcription unrelated to any known DNA polymerases.</title>
        <authorList>
            <person name="Yang W."/>
            <person name="Rogozin I.B."/>
            <person name="Koonin E.V."/>
        </authorList>
    </citation>
    <scope>PROTEIN FAMILY</scope>
</reference>
<reference key="6">
    <citation type="journal article" date="2003" name="Nature">
        <title>Global analysis of protein localization in budding yeast.</title>
        <authorList>
            <person name="Huh W.-K."/>
            <person name="Falvo J.V."/>
            <person name="Gerke L.C."/>
            <person name="Carroll A.S."/>
            <person name="Howson R.W."/>
            <person name="Weissman J.S."/>
            <person name="O'Shea E.K."/>
        </authorList>
    </citation>
    <scope>SUBCELLULAR LOCATION [LARGE SCALE ANALYSIS]</scope>
</reference>
<reference key="7">
    <citation type="journal article" date="2003" name="Nature">
        <title>Global analysis of protein expression in yeast.</title>
        <authorList>
            <person name="Ghaemmaghami S."/>
            <person name="Huh W.-K."/>
            <person name="Bower K."/>
            <person name="Howson R.W."/>
            <person name="Belle A."/>
            <person name="Dephoure N."/>
            <person name="O'Shea E.K."/>
            <person name="Weissman J.S."/>
        </authorList>
    </citation>
    <scope>LEVEL OF PROTEIN EXPRESSION [LARGE SCALE ANALYSIS]</scope>
</reference>
<reference key="8">
    <citation type="journal article" date="2009" name="Science">
        <title>Global analysis of Cdk1 substrate phosphorylation sites provides insights into evolution.</title>
        <authorList>
            <person name="Holt L.J."/>
            <person name="Tuch B.B."/>
            <person name="Villen J."/>
            <person name="Johnson A.D."/>
            <person name="Gygi S.P."/>
            <person name="Morgan D.O."/>
        </authorList>
    </citation>
    <scope>PHOSPHORYLATION [LARGE SCALE ANALYSIS] AT SER-789</scope>
    <scope>IDENTIFICATION BY MASS SPECTROMETRY [LARGE SCALE ANALYSIS]</scope>
</reference>
<reference key="9">
    <citation type="journal article" date="2010" name="Science">
        <title>A global protein kinase and phosphatase interaction network in yeast.</title>
        <authorList>
            <person name="Breitkreutz A."/>
            <person name="Choi H."/>
            <person name="Sharom J.R."/>
            <person name="Boucher L."/>
            <person name="Neduva V."/>
            <person name="Larsen B."/>
            <person name="Lin Z.Y."/>
            <person name="Breitkreutz B.J."/>
            <person name="Stark C."/>
            <person name="Liu G."/>
            <person name="Ahn J."/>
            <person name="Dewar-Darch D."/>
            <person name="Reguly T."/>
            <person name="Tang X."/>
            <person name="Almeida R."/>
            <person name="Qin Z.S."/>
            <person name="Pawson T."/>
            <person name="Gingras A.C."/>
            <person name="Nesvizhskii A.I."/>
            <person name="Tyers M."/>
        </authorList>
    </citation>
    <scope>IDENTIFICATION BY MASS SPECTROMETRY</scope>
    <scope>INTERACTION WITH FRK1</scope>
</reference>
<protein>
    <recommendedName>
        <fullName>rDNA transcriptional regulator POL5</fullName>
        <ecNumber>2.7.7.7</ecNumber>
    </recommendedName>
    <alternativeName>
        <fullName>DNA polymerase V</fullName>
        <shortName>POL V</shortName>
    </alternativeName>
    <alternativeName>
        <fullName evidence="6">DNA polymerase phi</fullName>
    </alternativeName>
</protein>
<evidence type="ECO:0000256" key="1">
    <source>
        <dbReference type="SAM" id="MobiDB-lite"/>
    </source>
</evidence>
<evidence type="ECO:0000269" key="2">
    <source>
    </source>
</evidence>
<evidence type="ECO:0000269" key="3">
    <source>
    </source>
</evidence>
<evidence type="ECO:0000269" key="4">
    <source>
    </source>
</evidence>
<evidence type="ECO:0000269" key="5">
    <source>
    </source>
</evidence>
<evidence type="ECO:0000303" key="6">
    <source>
    </source>
</evidence>
<evidence type="ECO:0000305" key="7">
    <source>
    </source>
</evidence>
<evidence type="ECO:0000305" key="8">
    <source>
    </source>
</evidence>
<evidence type="ECO:0007744" key="9">
    <source>
    </source>
</evidence>
<organism>
    <name type="scientific">Saccharomyces cerevisiae (strain ATCC 204508 / S288c)</name>
    <name type="common">Baker's yeast</name>
    <dbReference type="NCBI Taxonomy" id="559292"/>
    <lineage>
        <taxon>Eukaryota</taxon>
        <taxon>Fungi</taxon>
        <taxon>Dikarya</taxon>
        <taxon>Ascomycota</taxon>
        <taxon>Saccharomycotina</taxon>
        <taxon>Saccharomycetes</taxon>
        <taxon>Saccharomycetales</taxon>
        <taxon>Saccharomycetaceae</taxon>
        <taxon>Saccharomyces</taxon>
    </lineage>
</organism>
<sequence length="1022" mass="115894">MTGKVNRDLFFKLASDLREERLHAAVALIKDLSALDLPDDAEEWSYVLNRLIKGLSSDRNSARLGFSLCLTEVINLAVNMPPGQRPKGLESTNEFLSTLSTILNVNVNEGTKKSMKGKDERGILFGKLFGLKSLLNEPLFSEIFVKDLEKGNTEFFIRFTEQLIDLALKKNWIKEPCFFTLFQTMKMLLPFMDESSAEKILLIYDKYDLTLTNEGLSTYLLLKYEGDESLIPSVLDLKNPGWKDNDPLARGNLPLLTKVLRNSSVIPDANGGLKETKKQKNTNWNPRLHFVWSVLLPLFGNGKLENTSHISKKRKKTNNKKVQNSIQFPEFWKMAVDESFFNEKASSERKYLGFLIIDAAFKAVPGSYIGFCFSQNVMRTLINQSIDSQRVLNKISQLTLDSIVKACEEDSANRLVPCLNAMLFGPHGSINFDKLTKSGTVSKLIAIKELPSTVLAQLLDVFFLQLQDKKGVLSHTLFALDSILHIVRAHKVEINDMDIMKPVLRPIVYMAFFKHTSDDLKLEQLHELAKERLYSILGELTINKEIRCKDPEINSWQYLTLKLILDIENSHVGDLINPLDENLENIKNEAISCLSKVCRSRTAQSWGLSTLLSMCLVQLYAGDTDSISVIEELCEFSKHENNSMVGITEILLSLLAQKKALLRKLSLIIWQQFIEEVGLEELQILLDILKARENKQGFAQLFEGEEEFEEIKEENDASEDESKTGSESESESESDSDDADEKDEEDEANEDILNIDKEATSALVKALNLPDNIVNDKGEVDLDQLEGLSDDGGDDEDEESMDDEKMMELDDQLSEIFKRRKEALSSISTGNQRKFEVKQSRENVISFKHRVVDMLAVYVKYCEKLTLANKSEHSNNLGGSLSKLVYFIIPMLKCVNETLDRPLADKISKLLKGKIFKIKVTAFKDMNKDIELMDLLKKTHKLMLTSKPGQHAAVFYSMCSTSSLFLSKLYVEIGGNDKLDELIDLYTATTKEWMQKGKCGPNIFIDFINWLSSKKQTVMDKE</sequence>
<comment type="function">
    <text evidence="2">Plays an important role in the regulation of rRNA transcription. Binds near or at the enhancer region of rRNA repeating units. May have DNA polymerase activity, but it is not required for in vivo function.</text>
</comment>
<comment type="catalytic activity">
    <reaction evidence="2">
        <text>DNA(n) + a 2'-deoxyribonucleoside 5'-triphosphate = DNA(n+1) + diphosphate</text>
        <dbReference type="Rhea" id="RHEA:22508"/>
        <dbReference type="Rhea" id="RHEA-COMP:17339"/>
        <dbReference type="Rhea" id="RHEA-COMP:17340"/>
        <dbReference type="ChEBI" id="CHEBI:33019"/>
        <dbReference type="ChEBI" id="CHEBI:61560"/>
        <dbReference type="ChEBI" id="CHEBI:173112"/>
        <dbReference type="EC" id="2.7.7.7"/>
    </reaction>
</comment>
<comment type="activity regulation">
    <text evidence="2">Stimulated by PCNA and inhibited by aphidicolin.</text>
</comment>
<comment type="subunit">
    <text evidence="5">Interacts with FRK1.</text>
</comment>
<comment type="subcellular location">
    <subcellularLocation>
        <location evidence="2 3">Nucleus</location>
        <location evidence="2 3">Nucleolus</location>
    </subcellularLocation>
</comment>
<comment type="miscellaneous">
    <text evidence="4">Present with 4490 molecules/cell in log phase SD medium.</text>
</comment>
<comment type="similarity">
    <text evidence="8">Belongs to the MYBBP1A family.</text>
</comment>
<comment type="caution">
    <text evidence="7 8">Was originally thought to belong to the DNA polymerase type-B family based on conserved motifs (PubMed:12093911). Has later been shown to be unrelated to B class DNA polymerases. The observation of a low level of polymerase activity in vitro, which is not required for its essential cellular function, may require further validation (PubMed:12695662).</text>
</comment>
<proteinExistence type="evidence at protein level"/>
<gene>
    <name evidence="6" type="primary">POL5</name>
    <name type="ordered locus">YEL055C</name>
</gene>
<keyword id="KW-0539">Nucleus</keyword>
<keyword id="KW-0597">Phosphoprotein</keyword>
<keyword id="KW-1185">Reference proteome</keyword>
<keyword id="KW-0808">Transferase</keyword>
<dbReference type="EC" id="2.7.7.7"/>
<dbReference type="EMBL" id="AB027253">
    <property type="protein sequence ID" value="BAA77722.1"/>
    <property type="molecule type" value="Genomic_DNA"/>
</dbReference>
<dbReference type="EMBL" id="U18795">
    <property type="protein sequence ID" value="AAB65032.1"/>
    <property type="molecule type" value="Genomic_DNA"/>
</dbReference>
<dbReference type="EMBL" id="BK006939">
    <property type="protein sequence ID" value="DAA07599.1"/>
    <property type="molecule type" value="Genomic_DNA"/>
</dbReference>
<dbReference type="PIR" id="S50534">
    <property type="entry name" value="S50534"/>
</dbReference>
<dbReference type="RefSeq" id="NP_010859.1">
    <property type="nucleotide sequence ID" value="NM_001178870.1"/>
</dbReference>
<dbReference type="BioGRID" id="36674">
    <property type="interactions" value="425"/>
</dbReference>
<dbReference type="DIP" id="DIP-6314N"/>
<dbReference type="FunCoup" id="P39985">
    <property type="interactions" value="469"/>
</dbReference>
<dbReference type="IntAct" id="P39985">
    <property type="interactions" value="21"/>
</dbReference>
<dbReference type="MINT" id="P39985"/>
<dbReference type="STRING" id="4932.YEL055C"/>
<dbReference type="iPTMnet" id="P39985"/>
<dbReference type="PaxDb" id="4932-YEL055C"/>
<dbReference type="PeptideAtlas" id="P39985"/>
<dbReference type="EnsemblFungi" id="YEL055C_mRNA">
    <property type="protein sequence ID" value="YEL055C"/>
    <property type="gene ID" value="YEL055C"/>
</dbReference>
<dbReference type="GeneID" id="856655"/>
<dbReference type="KEGG" id="sce:YEL055C"/>
<dbReference type="AGR" id="SGD:S000000781"/>
<dbReference type="SGD" id="S000000781">
    <property type="gene designation" value="POL5"/>
</dbReference>
<dbReference type="VEuPathDB" id="FungiDB:YEL055C"/>
<dbReference type="eggNOG" id="KOG1926">
    <property type="taxonomic scope" value="Eukaryota"/>
</dbReference>
<dbReference type="GeneTree" id="ENSGT00390000017457"/>
<dbReference type="HOGENOM" id="CLU_005212_1_0_1"/>
<dbReference type="InParanoid" id="P39985"/>
<dbReference type="OMA" id="VWKHDDP"/>
<dbReference type="OrthoDB" id="342531at2759"/>
<dbReference type="BioCyc" id="YEAST:G3O-30173-MONOMER"/>
<dbReference type="BioGRID-ORCS" id="856655">
    <property type="hits" value="4 hits in 10 CRISPR screens"/>
</dbReference>
<dbReference type="PRO" id="PR:P39985"/>
<dbReference type="Proteomes" id="UP000002311">
    <property type="component" value="Chromosome V"/>
</dbReference>
<dbReference type="RNAct" id="P39985">
    <property type="molecule type" value="protein"/>
</dbReference>
<dbReference type="GO" id="GO:0005730">
    <property type="term" value="C:nucleolus"/>
    <property type="evidence" value="ECO:0000314"/>
    <property type="project" value="SGD"/>
</dbReference>
<dbReference type="GO" id="GO:0032040">
    <property type="term" value="C:small-subunit processome"/>
    <property type="evidence" value="ECO:0000353"/>
    <property type="project" value="ComplexPortal"/>
</dbReference>
<dbReference type="GO" id="GO:0003887">
    <property type="term" value="F:DNA-directed DNA polymerase activity"/>
    <property type="evidence" value="ECO:0007669"/>
    <property type="project" value="UniProtKB-EC"/>
</dbReference>
<dbReference type="GO" id="GO:0000166">
    <property type="term" value="F:nucleotide binding"/>
    <property type="evidence" value="ECO:0007669"/>
    <property type="project" value="InterPro"/>
</dbReference>
<dbReference type="GO" id="GO:0000182">
    <property type="term" value="F:rDNA binding"/>
    <property type="evidence" value="ECO:0000314"/>
    <property type="project" value="SGD"/>
</dbReference>
<dbReference type="GO" id="GO:0042134">
    <property type="term" value="F:rRNA primary transcript binding"/>
    <property type="evidence" value="ECO:0000314"/>
    <property type="project" value="SGD"/>
</dbReference>
<dbReference type="GO" id="GO:0030490">
    <property type="term" value="P:maturation of SSU-rRNA"/>
    <property type="evidence" value="ECO:0000303"/>
    <property type="project" value="ComplexPortal"/>
</dbReference>
<dbReference type="GO" id="GO:0090070">
    <property type="term" value="P:positive regulation of ribosome biogenesis"/>
    <property type="evidence" value="ECO:0000314"/>
    <property type="project" value="SGD"/>
</dbReference>
<dbReference type="GO" id="GO:0006355">
    <property type="term" value="P:regulation of DNA-templated transcription"/>
    <property type="evidence" value="ECO:0007669"/>
    <property type="project" value="InterPro"/>
</dbReference>
<dbReference type="GO" id="GO:0000027">
    <property type="term" value="P:ribosomal large subunit assembly"/>
    <property type="evidence" value="ECO:0000314"/>
    <property type="project" value="SGD"/>
</dbReference>
<dbReference type="GO" id="GO:0006364">
    <property type="term" value="P:rRNA processing"/>
    <property type="evidence" value="ECO:0000314"/>
    <property type="project" value="SGD"/>
</dbReference>
<dbReference type="GO" id="GO:0009303">
    <property type="term" value="P:rRNA transcription"/>
    <property type="evidence" value="ECO:0000315"/>
    <property type="project" value="SGD"/>
</dbReference>
<dbReference type="InterPro" id="IPR016024">
    <property type="entry name" value="ARM-type_fold"/>
</dbReference>
<dbReference type="InterPro" id="IPR017964">
    <property type="entry name" value="DNA-dir_DNA_pol_B_CS"/>
</dbReference>
<dbReference type="InterPro" id="IPR007015">
    <property type="entry name" value="DNA_pol_V/MYBBP1A"/>
</dbReference>
<dbReference type="PANTHER" id="PTHR13213:SF2">
    <property type="entry name" value="MYB-BINDING PROTEIN 1A"/>
    <property type="match status" value="1"/>
</dbReference>
<dbReference type="PANTHER" id="PTHR13213">
    <property type="entry name" value="MYB-BINDING PROTEIN 1A FAMILY MEMBER"/>
    <property type="match status" value="1"/>
</dbReference>
<dbReference type="Pfam" id="PF04931">
    <property type="entry name" value="DNA_pol_phi"/>
    <property type="match status" value="1"/>
</dbReference>
<dbReference type="SUPFAM" id="SSF48371">
    <property type="entry name" value="ARM repeat"/>
    <property type="match status" value="1"/>
</dbReference>
<dbReference type="PROSITE" id="PS00116">
    <property type="entry name" value="DNA_POLYMERASE_B"/>
    <property type="match status" value="1"/>
</dbReference>
<accession>P39985</accession>
<accession>D3DLJ5</accession>
<accession>Q9Y737</accession>
<name>DPO5_YEAST</name>